<evidence type="ECO:0000255" key="1">
    <source>
        <dbReference type="HAMAP-Rule" id="MF_01152"/>
    </source>
</evidence>
<keyword id="KW-0143">Chaperone</keyword>
<keyword id="KW-0963">Cytoplasm</keyword>
<keyword id="KW-0235">DNA replication</keyword>
<keyword id="KW-0479">Metal-binding</keyword>
<keyword id="KW-1185">Reference proteome</keyword>
<keyword id="KW-0677">Repeat</keyword>
<keyword id="KW-0346">Stress response</keyword>
<keyword id="KW-0862">Zinc</keyword>
<keyword id="KW-0863">Zinc-finger</keyword>
<accession>A6WX07</accession>
<proteinExistence type="inferred from homology"/>
<organism>
    <name type="scientific">Brucella anthropi (strain ATCC 49188 / DSM 6882 / CCUG 24695 / JCM 21032 / LMG 3331 / NBRC 15819 / NCTC 12168 / Alc 37)</name>
    <name type="common">Ochrobactrum anthropi</name>
    <dbReference type="NCBI Taxonomy" id="439375"/>
    <lineage>
        <taxon>Bacteria</taxon>
        <taxon>Pseudomonadati</taxon>
        <taxon>Pseudomonadota</taxon>
        <taxon>Alphaproteobacteria</taxon>
        <taxon>Hyphomicrobiales</taxon>
        <taxon>Brucellaceae</taxon>
        <taxon>Brucella/Ochrobactrum group</taxon>
        <taxon>Brucella</taxon>
    </lineage>
</organism>
<name>DNAJ_BRUA4</name>
<gene>
    <name evidence="1" type="primary">dnaJ</name>
    <name type="ordered locus">Oant_0789</name>
</gene>
<sequence>MKIDYYEALGVERTADDKVLKTAFRKLAMEYHPDRNPNNPEAERKFKEIGEAYETLKDPQKRAAYDRFGHAAFENGGMGGGFGNGFGGSGGFADIFEDIFGEMMGGGRRRSNGGRERGADLRYNMEVTLEEAYAGKTAQIRVPTSITCDECSGSGAKAGSQPTTCTMCSGSGRVRAAQGFFSVERTCPTCNGRGQIIKDPCGKCHGQGRVTQERSLSVNIPAGIEDGTRIRLSGEGEAGMRGGPSGDLYIFLSVKPHEFFQRDGSDLYCKVPISMTTAALGGQFEVSTLDGTQTRVKVPDGTQNGKQFRLKGKGMPVLRQAAVGDLYIQIDIETPQNLSKRQRELLEEFEKLSSQENSPKSAGFFSRMKEFFEGIGE</sequence>
<dbReference type="EMBL" id="CP000758">
    <property type="protein sequence ID" value="ABS13511.1"/>
    <property type="molecule type" value="Genomic_DNA"/>
</dbReference>
<dbReference type="RefSeq" id="WP_012091025.1">
    <property type="nucleotide sequence ID" value="NC_009667.1"/>
</dbReference>
<dbReference type="SMR" id="A6WX07"/>
<dbReference type="STRING" id="439375.Oant_0789"/>
<dbReference type="KEGG" id="oan:Oant_0789"/>
<dbReference type="PATRIC" id="fig|439375.7.peg.832"/>
<dbReference type="eggNOG" id="COG0484">
    <property type="taxonomic scope" value="Bacteria"/>
</dbReference>
<dbReference type="HOGENOM" id="CLU_017633_0_7_5"/>
<dbReference type="PhylomeDB" id="A6WX07"/>
<dbReference type="Proteomes" id="UP000002301">
    <property type="component" value="Chromosome 1"/>
</dbReference>
<dbReference type="GO" id="GO:0005737">
    <property type="term" value="C:cytoplasm"/>
    <property type="evidence" value="ECO:0007669"/>
    <property type="project" value="UniProtKB-SubCell"/>
</dbReference>
<dbReference type="GO" id="GO:0005524">
    <property type="term" value="F:ATP binding"/>
    <property type="evidence" value="ECO:0007669"/>
    <property type="project" value="InterPro"/>
</dbReference>
<dbReference type="GO" id="GO:0031072">
    <property type="term" value="F:heat shock protein binding"/>
    <property type="evidence" value="ECO:0007669"/>
    <property type="project" value="InterPro"/>
</dbReference>
<dbReference type="GO" id="GO:0051082">
    <property type="term" value="F:unfolded protein binding"/>
    <property type="evidence" value="ECO:0007669"/>
    <property type="project" value="UniProtKB-UniRule"/>
</dbReference>
<dbReference type="GO" id="GO:0008270">
    <property type="term" value="F:zinc ion binding"/>
    <property type="evidence" value="ECO:0007669"/>
    <property type="project" value="UniProtKB-UniRule"/>
</dbReference>
<dbReference type="GO" id="GO:0051085">
    <property type="term" value="P:chaperone cofactor-dependent protein refolding"/>
    <property type="evidence" value="ECO:0007669"/>
    <property type="project" value="TreeGrafter"/>
</dbReference>
<dbReference type="GO" id="GO:0006260">
    <property type="term" value="P:DNA replication"/>
    <property type="evidence" value="ECO:0007669"/>
    <property type="project" value="UniProtKB-KW"/>
</dbReference>
<dbReference type="GO" id="GO:0042026">
    <property type="term" value="P:protein refolding"/>
    <property type="evidence" value="ECO:0007669"/>
    <property type="project" value="TreeGrafter"/>
</dbReference>
<dbReference type="GO" id="GO:0009408">
    <property type="term" value="P:response to heat"/>
    <property type="evidence" value="ECO:0007669"/>
    <property type="project" value="InterPro"/>
</dbReference>
<dbReference type="CDD" id="cd06257">
    <property type="entry name" value="DnaJ"/>
    <property type="match status" value="1"/>
</dbReference>
<dbReference type="CDD" id="cd10747">
    <property type="entry name" value="DnaJ_C"/>
    <property type="match status" value="1"/>
</dbReference>
<dbReference type="CDD" id="cd10719">
    <property type="entry name" value="DnaJ_zf"/>
    <property type="match status" value="1"/>
</dbReference>
<dbReference type="FunFam" id="1.10.287.110:FF:000034">
    <property type="entry name" value="Chaperone protein DnaJ"/>
    <property type="match status" value="1"/>
</dbReference>
<dbReference type="FunFam" id="2.10.230.10:FF:000002">
    <property type="entry name" value="Molecular chaperone DnaJ"/>
    <property type="match status" value="1"/>
</dbReference>
<dbReference type="FunFam" id="2.60.260.20:FF:000004">
    <property type="entry name" value="Molecular chaperone DnaJ"/>
    <property type="match status" value="1"/>
</dbReference>
<dbReference type="Gene3D" id="1.10.287.110">
    <property type="entry name" value="DnaJ domain"/>
    <property type="match status" value="1"/>
</dbReference>
<dbReference type="Gene3D" id="2.10.230.10">
    <property type="entry name" value="Heat shock protein DnaJ, cysteine-rich domain"/>
    <property type="match status" value="1"/>
</dbReference>
<dbReference type="Gene3D" id="2.60.260.20">
    <property type="entry name" value="Urease metallochaperone UreE, N-terminal domain"/>
    <property type="match status" value="2"/>
</dbReference>
<dbReference type="HAMAP" id="MF_01152">
    <property type="entry name" value="DnaJ"/>
    <property type="match status" value="1"/>
</dbReference>
<dbReference type="InterPro" id="IPR012724">
    <property type="entry name" value="DnaJ"/>
</dbReference>
<dbReference type="InterPro" id="IPR002939">
    <property type="entry name" value="DnaJ_C"/>
</dbReference>
<dbReference type="InterPro" id="IPR001623">
    <property type="entry name" value="DnaJ_domain"/>
</dbReference>
<dbReference type="InterPro" id="IPR018253">
    <property type="entry name" value="DnaJ_domain_CS"/>
</dbReference>
<dbReference type="InterPro" id="IPR008971">
    <property type="entry name" value="HSP40/DnaJ_pept-bd"/>
</dbReference>
<dbReference type="InterPro" id="IPR001305">
    <property type="entry name" value="HSP_DnaJ_Cys-rich_dom"/>
</dbReference>
<dbReference type="InterPro" id="IPR036410">
    <property type="entry name" value="HSP_DnaJ_Cys-rich_dom_sf"/>
</dbReference>
<dbReference type="InterPro" id="IPR036869">
    <property type="entry name" value="J_dom_sf"/>
</dbReference>
<dbReference type="NCBIfam" id="TIGR02349">
    <property type="entry name" value="DnaJ_bact"/>
    <property type="match status" value="1"/>
</dbReference>
<dbReference type="NCBIfam" id="NF008035">
    <property type="entry name" value="PRK10767.1"/>
    <property type="match status" value="1"/>
</dbReference>
<dbReference type="PANTHER" id="PTHR43096:SF48">
    <property type="entry name" value="CHAPERONE PROTEIN DNAJ"/>
    <property type="match status" value="1"/>
</dbReference>
<dbReference type="PANTHER" id="PTHR43096">
    <property type="entry name" value="DNAJ HOMOLOG 1, MITOCHONDRIAL-RELATED"/>
    <property type="match status" value="1"/>
</dbReference>
<dbReference type="Pfam" id="PF00226">
    <property type="entry name" value="DnaJ"/>
    <property type="match status" value="1"/>
</dbReference>
<dbReference type="Pfam" id="PF01556">
    <property type="entry name" value="DnaJ_C"/>
    <property type="match status" value="1"/>
</dbReference>
<dbReference type="Pfam" id="PF00684">
    <property type="entry name" value="DnaJ_CXXCXGXG"/>
    <property type="match status" value="1"/>
</dbReference>
<dbReference type="PRINTS" id="PR00625">
    <property type="entry name" value="JDOMAIN"/>
</dbReference>
<dbReference type="SMART" id="SM00271">
    <property type="entry name" value="DnaJ"/>
    <property type="match status" value="1"/>
</dbReference>
<dbReference type="SUPFAM" id="SSF46565">
    <property type="entry name" value="Chaperone J-domain"/>
    <property type="match status" value="1"/>
</dbReference>
<dbReference type="SUPFAM" id="SSF57938">
    <property type="entry name" value="DnaJ/Hsp40 cysteine-rich domain"/>
    <property type="match status" value="1"/>
</dbReference>
<dbReference type="SUPFAM" id="SSF49493">
    <property type="entry name" value="HSP40/DnaJ peptide-binding domain"/>
    <property type="match status" value="2"/>
</dbReference>
<dbReference type="PROSITE" id="PS00636">
    <property type="entry name" value="DNAJ_1"/>
    <property type="match status" value="1"/>
</dbReference>
<dbReference type="PROSITE" id="PS50076">
    <property type="entry name" value="DNAJ_2"/>
    <property type="match status" value="1"/>
</dbReference>
<dbReference type="PROSITE" id="PS51188">
    <property type="entry name" value="ZF_CR"/>
    <property type="match status" value="1"/>
</dbReference>
<reference key="1">
    <citation type="journal article" date="2011" name="J. Bacteriol.">
        <title>Genome of Ochrobactrum anthropi ATCC 49188 T, a versatile opportunistic pathogen and symbiont of several eukaryotic hosts.</title>
        <authorList>
            <person name="Chain P.S."/>
            <person name="Lang D.M."/>
            <person name="Comerci D.J."/>
            <person name="Malfatti S.A."/>
            <person name="Vergez L.M."/>
            <person name="Shin M."/>
            <person name="Ugalde R.A."/>
            <person name="Garcia E."/>
            <person name="Tolmasky M.E."/>
        </authorList>
    </citation>
    <scope>NUCLEOTIDE SEQUENCE [LARGE SCALE GENOMIC DNA]</scope>
    <source>
        <strain>ATCC 49188 / DSM 6882 / CCUG 24695 / JCM 21032 / LMG 3331 / NBRC 15819 / NCTC 12168 / Alc 37</strain>
    </source>
</reference>
<protein>
    <recommendedName>
        <fullName evidence="1">Chaperone protein DnaJ</fullName>
    </recommendedName>
</protein>
<feature type="chain" id="PRO_1000085236" description="Chaperone protein DnaJ">
    <location>
        <begin position="1"/>
        <end position="377"/>
    </location>
</feature>
<feature type="domain" description="J" evidence="1">
    <location>
        <begin position="4"/>
        <end position="69"/>
    </location>
</feature>
<feature type="repeat" description="CXXCXGXG motif">
    <location>
        <begin position="148"/>
        <end position="155"/>
    </location>
</feature>
<feature type="repeat" description="CXXCXGXG motif">
    <location>
        <begin position="165"/>
        <end position="172"/>
    </location>
</feature>
<feature type="repeat" description="CXXCXGXG motif">
    <location>
        <begin position="187"/>
        <end position="194"/>
    </location>
</feature>
<feature type="repeat" description="CXXCXGXG motif">
    <location>
        <begin position="201"/>
        <end position="208"/>
    </location>
</feature>
<feature type="zinc finger region" description="CR-type" evidence="1">
    <location>
        <begin position="135"/>
        <end position="213"/>
    </location>
</feature>
<feature type="binding site" evidence="1">
    <location>
        <position position="148"/>
    </location>
    <ligand>
        <name>Zn(2+)</name>
        <dbReference type="ChEBI" id="CHEBI:29105"/>
        <label>1</label>
    </ligand>
</feature>
<feature type="binding site" evidence="1">
    <location>
        <position position="151"/>
    </location>
    <ligand>
        <name>Zn(2+)</name>
        <dbReference type="ChEBI" id="CHEBI:29105"/>
        <label>1</label>
    </ligand>
</feature>
<feature type="binding site" evidence="1">
    <location>
        <position position="165"/>
    </location>
    <ligand>
        <name>Zn(2+)</name>
        <dbReference type="ChEBI" id="CHEBI:29105"/>
        <label>2</label>
    </ligand>
</feature>
<feature type="binding site" evidence="1">
    <location>
        <position position="168"/>
    </location>
    <ligand>
        <name>Zn(2+)</name>
        <dbReference type="ChEBI" id="CHEBI:29105"/>
        <label>2</label>
    </ligand>
</feature>
<feature type="binding site" evidence="1">
    <location>
        <position position="187"/>
    </location>
    <ligand>
        <name>Zn(2+)</name>
        <dbReference type="ChEBI" id="CHEBI:29105"/>
        <label>2</label>
    </ligand>
</feature>
<feature type="binding site" evidence="1">
    <location>
        <position position="190"/>
    </location>
    <ligand>
        <name>Zn(2+)</name>
        <dbReference type="ChEBI" id="CHEBI:29105"/>
        <label>2</label>
    </ligand>
</feature>
<feature type="binding site" evidence="1">
    <location>
        <position position="201"/>
    </location>
    <ligand>
        <name>Zn(2+)</name>
        <dbReference type="ChEBI" id="CHEBI:29105"/>
        <label>1</label>
    </ligand>
</feature>
<feature type="binding site" evidence="1">
    <location>
        <position position="204"/>
    </location>
    <ligand>
        <name>Zn(2+)</name>
        <dbReference type="ChEBI" id="CHEBI:29105"/>
        <label>1</label>
    </ligand>
</feature>
<comment type="function">
    <text evidence="1">Participates actively in the response to hyperosmotic and heat shock by preventing the aggregation of stress-denatured proteins and by disaggregating proteins, also in an autonomous, DnaK-independent fashion. Unfolded proteins bind initially to DnaJ; upon interaction with the DnaJ-bound protein, DnaK hydrolyzes its bound ATP, resulting in the formation of a stable complex. GrpE releases ADP from DnaK; ATP binding to DnaK triggers the release of the substrate protein, thus completing the reaction cycle. Several rounds of ATP-dependent interactions between DnaJ, DnaK and GrpE are required for fully efficient folding. Also involved, together with DnaK and GrpE, in the DNA replication of plasmids through activation of initiation proteins.</text>
</comment>
<comment type="cofactor">
    <cofactor evidence="1">
        <name>Zn(2+)</name>
        <dbReference type="ChEBI" id="CHEBI:29105"/>
    </cofactor>
    <text evidence="1">Binds 2 Zn(2+) ions per monomer.</text>
</comment>
<comment type="subunit">
    <text evidence="1">Homodimer.</text>
</comment>
<comment type="subcellular location">
    <subcellularLocation>
        <location evidence="1">Cytoplasm</location>
    </subcellularLocation>
</comment>
<comment type="domain">
    <text evidence="1">The J domain is necessary and sufficient to stimulate DnaK ATPase activity. Zinc center 1 plays an important role in the autonomous, DnaK-independent chaperone activity of DnaJ. Zinc center 2 is essential for interaction with DnaK and for DnaJ activity.</text>
</comment>
<comment type="similarity">
    <text evidence="1">Belongs to the DnaJ family.</text>
</comment>